<protein>
    <recommendedName>
        <fullName evidence="10 11">Ixolaris</fullName>
    </recommendedName>
</protein>
<comment type="function">
    <text evidence="4 5 6 7 9">Anticoagulant protein that modulates blood feeding of ticks on vertebrate species (PubMed:16807644, PubMed:32394234). Inhibits activation of host blood coagulation factor X (F10) (PubMed:11986214, PubMed:18042685, PubMed:28734839). Inhibits activity of host coagulation factor VIIa-tissue factor (F7-F3) complex in a factor X/Xa-dependent manner (PubMed:11986214). Prevents interaction between host coagulation factor X and activated factor VIIIa (F8) (PubMed:18042685).</text>
</comment>
<comment type="subunit">
    <text evidence="4 5 6 8">Monomer (PubMed:31133602). Interacts with host coagulation factor X/F10 (inactive and activated) (PubMed:11986214, PubMed:16807644, PubMed:18042685, PubMed:31133602).</text>
</comment>
<comment type="subcellular location">
    <subcellularLocation>
        <location evidence="4">Secreted</location>
    </subcellularLocation>
</comment>
<comment type="tissue specificity">
    <text evidence="4">Saliva (at protein level) (PubMed:11986214). Salivary gland (PubMed:11986214).</text>
</comment>
<comment type="miscellaneous">
    <text evidence="9">In mouse model of melanoma, ixolaris labeled with iodine-131 is able to recognize tissue factor (F3)-expressing tumors and demonstrates anti-metastatic effect.</text>
</comment>
<name>IXOSP_IXOSC</name>
<organism evidence="13">
    <name type="scientific">Ixodes scapularis</name>
    <name type="common">Black-legged tick</name>
    <name type="synonym">Deer tick</name>
    <dbReference type="NCBI Taxonomy" id="6945"/>
    <lineage>
        <taxon>Eukaryota</taxon>
        <taxon>Metazoa</taxon>
        <taxon>Ecdysozoa</taxon>
        <taxon>Arthropoda</taxon>
        <taxon>Chelicerata</taxon>
        <taxon>Arachnida</taxon>
        <taxon>Acari</taxon>
        <taxon>Parasitiformes</taxon>
        <taxon>Ixodida</taxon>
        <taxon>Ixodoidea</taxon>
        <taxon>Ixodidae</taxon>
        <taxon>Ixodinae</taxon>
        <taxon>Ixodes</taxon>
    </lineage>
</organism>
<proteinExistence type="evidence at protein level"/>
<accession>Q964Q0</accession>
<dbReference type="EMBL" id="AF286029">
    <property type="protein sequence ID" value="AAK83022.1"/>
    <property type="molecule type" value="mRNA"/>
</dbReference>
<dbReference type="PDB" id="6NAN">
    <property type="method" value="NMR"/>
    <property type="chains" value="A=26-165"/>
</dbReference>
<dbReference type="PDBsum" id="6NAN"/>
<dbReference type="BMRB" id="Q964Q0"/>
<dbReference type="SMR" id="Q964Q0"/>
<dbReference type="IntAct" id="Q964Q0">
    <property type="interactions" value="2"/>
</dbReference>
<dbReference type="MEROPS" id="I02.025"/>
<dbReference type="VEuPathDB" id="VectorBase:ISCI006396"/>
<dbReference type="VEuPathDB" id="VectorBase:ISCP_015264"/>
<dbReference type="VEuPathDB" id="VectorBase:ISCW006396"/>
<dbReference type="OrthoDB" id="4473401at2759"/>
<dbReference type="Proteomes" id="UP000001555">
    <property type="component" value="Unplaced"/>
</dbReference>
<dbReference type="GO" id="GO:0005576">
    <property type="term" value="C:extracellular region"/>
    <property type="evidence" value="ECO:0007669"/>
    <property type="project" value="UniProtKB-SubCell"/>
</dbReference>
<dbReference type="GO" id="GO:0004867">
    <property type="term" value="F:serine-type endopeptidase inhibitor activity"/>
    <property type="evidence" value="ECO:0007669"/>
    <property type="project" value="UniProtKB-KW"/>
</dbReference>
<dbReference type="GO" id="GO:0090729">
    <property type="term" value="F:toxin activity"/>
    <property type="evidence" value="ECO:0007669"/>
    <property type="project" value="UniProtKB-KW"/>
</dbReference>
<dbReference type="GO" id="GO:0044562">
    <property type="term" value="P:envenomation resulting in negative regulation of voltage-gated potassium channel activity in another organism"/>
    <property type="evidence" value="ECO:0007669"/>
    <property type="project" value="UniProtKB-ARBA"/>
</dbReference>
<dbReference type="CDD" id="cd22625">
    <property type="entry name" value="Kunitz_ixolaris_1"/>
    <property type="match status" value="1"/>
</dbReference>
<dbReference type="CDD" id="cd22626">
    <property type="entry name" value="Kunitz_ixolaris_2"/>
    <property type="match status" value="1"/>
</dbReference>
<dbReference type="Gene3D" id="4.10.410.10">
    <property type="entry name" value="Pancreatic trypsin inhibitor Kunitz domain"/>
    <property type="match status" value="2"/>
</dbReference>
<dbReference type="InterPro" id="IPR002223">
    <property type="entry name" value="Kunitz_BPTI"/>
</dbReference>
<dbReference type="InterPro" id="IPR036880">
    <property type="entry name" value="Kunitz_BPTI_sf"/>
</dbReference>
<dbReference type="PANTHER" id="PTHR45938">
    <property type="entry name" value="ACP24A4-RELATED"/>
    <property type="match status" value="1"/>
</dbReference>
<dbReference type="PANTHER" id="PTHR45938:SF7">
    <property type="entry name" value="WAP, KAZAL, IMMUNOGLOBULIN, KUNITZ AND NTR DOMAIN-CONTAINING PROTEIN 2"/>
    <property type="match status" value="1"/>
</dbReference>
<dbReference type="Pfam" id="PF00014">
    <property type="entry name" value="Kunitz_BPTI"/>
    <property type="match status" value="1"/>
</dbReference>
<dbReference type="PRINTS" id="PR00759">
    <property type="entry name" value="BASICPTASE"/>
</dbReference>
<dbReference type="SMART" id="SM00131">
    <property type="entry name" value="KU"/>
    <property type="match status" value="1"/>
</dbReference>
<dbReference type="SUPFAM" id="SSF57362">
    <property type="entry name" value="BPTI-like"/>
    <property type="match status" value="2"/>
</dbReference>
<dbReference type="PROSITE" id="PS50279">
    <property type="entry name" value="BPTI_KUNITZ_2"/>
    <property type="match status" value="1"/>
</dbReference>
<keyword id="KW-0002">3D-structure</keyword>
<keyword id="KW-1203">Blood coagulation cascade inhibiting toxin</keyword>
<keyword id="KW-1015">Disulfide bond</keyword>
<keyword id="KW-0325">Glycoprotein</keyword>
<keyword id="KW-1199">Hemostasis impairing toxin</keyword>
<keyword id="KW-0646">Protease inhibitor</keyword>
<keyword id="KW-1185">Reference proteome</keyword>
<keyword id="KW-0677">Repeat</keyword>
<keyword id="KW-0964">Secreted</keyword>
<keyword id="KW-0722">Serine protease inhibitor</keyword>
<keyword id="KW-0732">Signal</keyword>
<keyword id="KW-0800">Toxin</keyword>
<evidence type="ECO:0000255" key="1"/>
<evidence type="ECO:0000255" key="2">
    <source>
        <dbReference type="PROSITE-ProRule" id="PRU00031"/>
    </source>
</evidence>
<evidence type="ECO:0000255" key="3">
    <source>
        <dbReference type="PROSITE-ProRule" id="PRU00498"/>
    </source>
</evidence>
<evidence type="ECO:0000269" key="4">
    <source>
    </source>
</evidence>
<evidence type="ECO:0000269" key="5">
    <source>
    </source>
</evidence>
<evidence type="ECO:0000269" key="6">
    <source>
    </source>
</evidence>
<evidence type="ECO:0000269" key="7">
    <source>
    </source>
</evidence>
<evidence type="ECO:0000269" key="8">
    <source>
    </source>
</evidence>
<evidence type="ECO:0000269" key="9">
    <source>
    </source>
</evidence>
<evidence type="ECO:0000303" key="10">
    <source>
    </source>
</evidence>
<evidence type="ECO:0000303" key="11">
    <source>
    </source>
</evidence>
<evidence type="ECO:0000305" key="12"/>
<evidence type="ECO:0000312" key="13">
    <source>
        <dbReference type="EMBL" id="AAK83022.1"/>
    </source>
</evidence>
<evidence type="ECO:0007744" key="14">
    <source>
        <dbReference type="PDB" id="6NAN"/>
    </source>
</evidence>
<evidence type="ECO:0007829" key="15">
    <source>
        <dbReference type="PDB" id="6NAN"/>
    </source>
</evidence>
<reference evidence="13" key="1">
    <citation type="journal article" date="2002" name="Blood">
        <title>Ixolaris, a novel recombinant tissue factor pathway inhibitor (TFPI) from the salivary gland of the tick, Ixodes scapularis: identification of factor X and factor Xa as scaffolds for the inhibition of factor VIIa/tissue factor complex.</title>
        <authorList>
            <person name="Francischetti I.M."/>
            <person name="Valenzuela J.G."/>
            <person name="Andersen J.F."/>
            <person name="Mather T.N."/>
            <person name="Ribeiro J.M."/>
        </authorList>
    </citation>
    <scope>NUCLEOTIDE SEQUENCE [MRNA]</scope>
    <scope>FUNCTION</scope>
    <scope>INTERACTION WITH HOST F10</scope>
    <scope>SUBCELLULAR LOCATION</scope>
    <scope>TISSUE SPECIFICITY</scope>
    <source>
        <tissue evidence="10">Salivary gland</tissue>
    </source>
</reference>
<reference evidence="12" key="2">
    <citation type="journal article" date="2006" name="Thromb. Haemost.">
        <title>Antithrombotic properties of Ixolaris, a potent inhibitor of the extrinsic pathway of the coagulation cascade.</title>
        <authorList>
            <person name="Nazareth R.A."/>
            <person name="Tomaz L.S."/>
            <person name="Ortiz-Costa S."/>
            <person name="Atella G.C."/>
            <person name="Ribeiro J.M."/>
            <person name="Francischetti I.M."/>
            <person name="Monteiro R.Q."/>
        </authorList>
    </citation>
    <scope>FUNCTION</scope>
    <scope>INTERACTION WITH HOST F10</scope>
</reference>
<reference evidence="12" key="3">
    <citation type="journal article" date="2008" name="Protein Sci.">
        <title>Ixolaris binding to factor X reveals a precursor state of factor Xa heparin-binding exosite.</title>
        <authorList>
            <person name="Monteiro R.Q."/>
            <person name="Rezaie A.R."/>
            <person name="Bae J.S."/>
            <person name="Calvo E."/>
            <person name="Andersen J.F."/>
            <person name="Francischetti I.M."/>
        </authorList>
    </citation>
    <scope>FUNCTION</scope>
    <scope>INTERACTION WITH HOST F10</scope>
</reference>
<reference evidence="12" key="4">
    <citation type="journal article" date="2017" name="Protein Expr. Purif.">
        <title>Recombinant expression of Ixolaris, a Kunitz-type inhibitor from the tick salivary gland, for NMR studies.</title>
        <authorList>
            <person name="De Paula V.S."/>
            <person name="Silva F.H.S."/>
            <person name="Francischetti I.M.B."/>
            <person name="Monteiro R.Q."/>
            <person name="Valente A.P."/>
        </authorList>
    </citation>
    <scope>FUNCTION</scope>
</reference>
<reference key="5">
    <citation type="journal article" date="2020" name="Clin. Exp. Metastasis">
        <title>Development of 131I-ixolaris as a theranostic agent: metastatic melanoma preclinical studies.</title>
        <authorList>
            <person name="Barboza T."/>
            <person name="Gomes T."/>
            <person name="da Costa Medeiros P."/>
            <person name="Ramos I.P."/>
            <person name="Francischetti I."/>
            <person name="Monteiro R.Q."/>
            <person name="Gutfilen B."/>
            <person name="de Souza S.A.L."/>
        </authorList>
    </citation>
    <scope>FUNCTION</scope>
    <scope>DEVELOPMENT AS A THERANOSTIC AGENT</scope>
</reference>
<reference evidence="14" key="6">
    <citation type="journal article" date="2019" name="Blood">
        <title>NMR structure determination of Ixolaris and factor X(a) interaction reveals a noncanonical mechanism of Kunitz inhibition.</title>
        <authorList>
            <person name="De Paula V.S."/>
            <person name="Sgourakis N.G."/>
            <person name="Francischetti I.M.B."/>
            <person name="Almeida F.C.L."/>
            <person name="Monteiro R.Q."/>
            <person name="Valente A.P."/>
        </authorList>
    </citation>
    <scope>STRUCTURE BY NMR OF 26-165</scope>
    <scope>SUBUNIT</scope>
    <scope>INTERACTION WITH HOST F10</scope>
    <scope>DISULFIDE BONDS</scope>
</reference>
<feature type="signal peptide" evidence="1">
    <location>
        <begin position="1"/>
        <end position="26"/>
    </location>
</feature>
<feature type="chain" id="PRO_5004321463" description="Ixolaris" evidence="1">
    <location>
        <begin position="27"/>
        <end position="165"/>
    </location>
</feature>
<feature type="domain" description="BPTI/Kunitz inhibitor 1" evidence="2">
    <location>
        <begin position="43"/>
        <end position="93"/>
    </location>
</feature>
<feature type="domain" description="BPTI/Kunitz inhibitor 2" evidence="2">
    <location>
        <begin position="101"/>
        <end position="151"/>
    </location>
</feature>
<feature type="glycosylation site" description="N-linked (GlcNAc...) asparagine" evidence="3">
    <location>
        <position position="90"/>
    </location>
</feature>
<feature type="glycosylation site" description="N-linked (GlcNAc...) asparagine" evidence="3">
    <location>
        <position position="123"/>
    </location>
</feature>
<feature type="glycosylation site" description="N-linked (GlcNAc...) asparagine" evidence="3">
    <location>
        <position position="161"/>
    </location>
</feature>
<feature type="disulfide bond" evidence="8 14">
    <location>
        <begin position="43"/>
        <end position="93"/>
    </location>
</feature>
<feature type="disulfide bond" evidence="8 14">
    <location>
        <begin position="51"/>
        <end position="76"/>
    </location>
</feature>
<feature type="disulfide bond" evidence="8 14">
    <location>
        <begin position="68"/>
        <end position="89"/>
    </location>
</feature>
<feature type="disulfide bond" evidence="8 14">
    <location>
        <begin position="101"/>
        <end position="151"/>
    </location>
</feature>
<feature type="disulfide bond" evidence="8 14">
    <location>
        <begin position="126"/>
        <end position="147"/>
    </location>
</feature>
<feature type="helix" evidence="15">
    <location>
        <begin position="40"/>
        <end position="43"/>
    </location>
</feature>
<feature type="strand" evidence="15">
    <location>
        <begin position="57"/>
        <end position="61"/>
    </location>
</feature>
<feature type="turn" evidence="15">
    <location>
        <begin position="63"/>
        <end position="65"/>
    </location>
</feature>
<feature type="strand" evidence="15">
    <location>
        <begin position="66"/>
        <end position="72"/>
    </location>
</feature>
<feature type="strand" evidence="15">
    <location>
        <begin position="83"/>
        <end position="85"/>
    </location>
</feature>
<feature type="helix" evidence="15">
    <location>
        <begin position="86"/>
        <end position="94"/>
    </location>
</feature>
<feature type="helix" evidence="15">
    <location>
        <begin position="100"/>
        <end position="102"/>
    </location>
</feature>
<feature type="strand" evidence="15">
    <location>
        <begin position="109"/>
        <end position="111"/>
    </location>
</feature>
<feature type="strand" evidence="15">
    <location>
        <begin position="114"/>
        <end position="120"/>
    </location>
</feature>
<feature type="turn" evidence="15">
    <location>
        <begin position="121"/>
        <end position="124"/>
    </location>
</feature>
<feature type="strand" evidence="15">
    <location>
        <begin position="125"/>
        <end position="131"/>
    </location>
</feature>
<feature type="strand" evidence="15">
    <location>
        <begin position="141"/>
        <end position="143"/>
    </location>
</feature>
<feature type="helix" evidence="15">
    <location>
        <begin position="144"/>
        <end position="152"/>
    </location>
</feature>
<sequence length="165" mass="18403">MRAVSCFLYYGVAWIALGSWGASSSAERVSEMDIYEFESWVSCLDPEQVTCESQEGTHASYNRKTGQCEEQKGTECGGGENHFETLLKCNESCNDAPKPPCSLEVDYGVGRANIPRWYYDTNNATCEMFTYGGITGNKNNFESEEECKETCKGFSLLKKVNVTIN</sequence>